<dbReference type="EC" id="2.7.7.23" evidence="1"/>
<dbReference type="EC" id="2.3.1.157" evidence="1"/>
<dbReference type="EMBL" id="CP000305">
    <property type="protein sequence ID" value="ABG20303.1"/>
    <property type="molecule type" value="Genomic_DNA"/>
</dbReference>
<dbReference type="EMBL" id="ACNQ01000019">
    <property type="protein sequence ID" value="EEO74901.1"/>
    <property type="molecule type" value="Genomic_DNA"/>
</dbReference>
<dbReference type="RefSeq" id="WP_002215550.1">
    <property type="nucleotide sequence ID" value="NZ_ACNQ01000019.1"/>
</dbReference>
<dbReference type="SMR" id="Q1CCH7"/>
<dbReference type="GeneID" id="57974605"/>
<dbReference type="KEGG" id="ypn:YPN_3976"/>
<dbReference type="HOGENOM" id="CLU_029499_15_2_6"/>
<dbReference type="UniPathway" id="UPA00113">
    <property type="reaction ID" value="UER00532"/>
</dbReference>
<dbReference type="UniPathway" id="UPA00113">
    <property type="reaction ID" value="UER00533"/>
</dbReference>
<dbReference type="UniPathway" id="UPA00973"/>
<dbReference type="Proteomes" id="UP000008936">
    <property type="component" value="Chromosome"/>
</dbReference>
<dbReference type="GO" id="GO:0005737">
    <property type="term" value="C:cytoplasm"/>
    <property type="evidence" value="ECO:0007669"/>
    <property type="project" value="UniProtKB-SubCell"/>
</dbReference>
<dbReference type="GO" id="GO:0016020">
    <property type="term" value="C:membrane"/>
    <property type="evidence" value="ECO:0007669"/>
    <property type="project" value="GOC"/>
</dbReference>
<dbReference type="GO" id="GO:0019134">
    <property type="term" value="F:glucosamine-1-phosphate N-acetyltransferase activity"/>
    <property type="evidence" value="ECO:0007669"/>
    <property type="project" value="UniProtKB-UniRule"/>
</dbReference>
<dbReference type="GO" id="GO:0000287">
    <property type="term" value="F:magnesium ion binding"/>
    <property type="evidence" value="ECO:0007669"/>
    <property type="project" value="UniProtKB-UniRule"/>
</dbReference>
<dbReference type="GO" id="GO:0003977">
    <property type="term" value="F:UDP-N-acetylglucosamine diphosphorylase activity"/>
    <property type="evidence" value="ECO:0007669"/>
    <property type="project" value="UniProtKB-UniRule"/>
</dbReference>
<dbReference type="GO" id="GO:0000902">
    <property type="term" value="P:cell morphogenesis"/>
    <property type="evidence" value="ECO:0007669"/>
    <property type="project" value="UniProtKB-UniRule"/>
</dbReference>
<dbReference type="GO" id="GO:0071555">
    <property type="term" value="P:cell wall organization"/>
    <property type="evidence" value="ECO:0007669"/>
    <property type="project" value="UniProtKB-KW"/>
</dbReference>
<dbReference type="GO" id="GO:0009245">
    <property type="term" value="P:lipid A biosynthetic process"/>
    <property type="evidence" value="ECO:0007669"/>
    <property type="project" value="UniProtKB-UniRule"/>
</dbReference>
<dbReference type="GO" id="GO:0009252">
    <property type="term" value="P:peptidoglycan biosynthetic process"/>
    <property type="evidence" value="ECO:0007669"/>
    <property type="project" value="UniProtKB-UniRule"/>
</dbReference>
<dbReference type="GO" id="GO:0008360">
    <property type="term" value="P:regulation of cell shape"/>
    <property type="evidence" value="ECO:0007669"/>
    <property type="project" value="UniProtKB-KW"/>
</dbReference>
<dbReference type="GO" id="GO:0006048">
    <property type="term" value="P:UDP-N-acetylglucosamine biosynthetic process"/>
    <property type="evidence" value="ECO:0007669"/>
    <property type="project" value="UniProtKB-UniPathway"/>
</dbReference>
<dbReference type="CDD" id="cd02540">
    <property type="entry name" value="GT2_GlmU_N_bac"/>
    <property type="match status" value="1"/>
</dbReference>
<dbReference type="CDD" id="cd03353">
    <property type="entry name" value="LbH_GlmU_C"/>
    <property type="match status" value="1"/>
</dbReference>
<dbReference type="FunFam" id="2.160.10.10:FF:000011">
    <property type="entry name" value="Bifunctional protein GlmU"/>
    <property type="match status" value="1"/>
</dbReference>
<dbReference type="FunFam" id="3.90.550.10:FF:000006">
    <property type="entry name" value="Bifunctional protein GlmU"/>
    <property type="match status" value="1"/>
</dbReference>
<dbReference type="Gene3D" id="2.160.10.10">
    <property type="entry name" value="Hexapeptide repeat proteins"/>
    <property type="match status" value="1"/>
</dbReference>
<dbReference type="Gene3D" id="3.90.550.10">
    <property type="entry name" value="Spore Coat Polysaccharide Biosynthesis Protein SpsA, Chain A"/>
    <property type="match status" value="1"/>
</dbReference>
<dbReference type="HAMAP" id="MF_01631">
    <property type="entry name" value="GlmU"/>
    <property type="match status" value="1"/>
</dbReference>
<dbReference type="InterPro" id="IPR005882">
    <property type="entry name" value="Bifunctional_GlmU"/>
</dbReference>
<dbReference type="InterPro" id="IPR050065">
    <property type="entry name" value="GlmU-like"/>
</dbReference>
<dbReference type="InterPro" id="IPR038009">
    <property type="entry name" value="GlmU_C_LbH"/>
</dbReference>
<dbReference type="InterPro" id="IPR001451">
    <property type="entry name" value="Hexapep"/>
</dbReference>
<dbReference type="InterPro" id="IPR018357">
    <property type="entry name" value="Hexapep_transf_CS"/>
</dbReference>
<dbReference type="InterPro" id="IPR025877">
    <property type="entry name" value="MobA-like_NTP_Trfase"/>
</dbReference>
<dbReference type="InterPro" id="IPR029044">
    <property type="entry name" value="Nucleotide-diphossugar_trans"/>
</dbReference>
<dbReference type="InterPro" id="IPR011004">
    <property type="entry name" value="Trimer_LpxA-like_sf"/>
</dbReference>
<dbReference type="NCBIfam" id="TIGR01173">
    <property type="entry name" value="glmU"/>
    <property type="match status" value="1"/>
</dbReference>
<dbReference type="NCBIfam" id="NF006986">
    <property type="entry name" value="PRK09451.1"/>
    <property type="match status" value="1"/>
</dbReference>
<dbReference type="PANTHER" id="PTHR43584:SF3">
    <property type="entry name" value="BIFUNCTIONAL PROTEIN GLMU"/>
    <property type="match status" value="1"/>
</dbReference>
<dbReference type="PANTHER" id="PTHR43584">
    <property type="entry name" value="NUCLEOTIDYL TRANSFERASE"/>
    <property type="match status" value="1"/>
</dbReference>
<dbReference type="Pfam" id="PF00132">
    <property type="entry name" value="Hexapep"/>
    <property type="match status" value="1"/>
</dbReference>
<dbReference type="Pfam" id="PF12804">
    <property type="entry name" value="NTP_transf_3"/>
    <property type="match status" value="1"/>
</dbReference>
<dbReference type="SUPFAM" id="SSF53448">
    <property type="entry name" value="Nucleotide-diphospho-sugar transferases"/>
    <property type="match status" value="1"/>
</dbReference>
<dbReference type="SUPFAM" id="SSF51161">
    <property type="entry name" value="Trimeric LpxA-like enzymes"/>
    <property type="match status" value="1"/>
</dbReference>
<dbReference type="PROSITE" id="PS00101">
    <property type="entry name" value="HEXAPEP_TRANSFERASES"/>
    <property type="match status" value="1"/>
</dbReference>
<sequence length="456" mass="48840">MSNSSMSVVILAAGKGTRMYSDLPKVLHPLAGKPMVQHVIDAAMKLGAQHVHLVYGHGGELLKKTLADPSLNWVLQAEQLGTGHAMQQAAPHFADDEDILMLYGDVPLISVDTLQRLLAAKPEGGIGLLTVKLDNPSGYGRIVRENGDVVGIVEHKDASDAQREINEINTGILVANGRDLKRWLSLLDNNNAQGEFYITDIIALAHADGKKIATVHPTRLSEVEGVNNRLQLSALERVFQTEQAEKLLLAGVMLLDPSRFDLRGELTHGRDITIDTNVIIEGHVILGDRVRIGTGCVLKNCVIGDDSEISPYTVLEDARLDANCTVGPFARLRPGAELAEGAHVGNFVEIKKARLGKGSKAGHLSYLGDAEIGAGVNIGAGTITCNYDGANKFKTIIGDDVFVGSDTQLVAPVTVANGATIGAGTTVTRDVAENELVISRVKQVHIQGWKRPVKKK</sequence>
<gene>
    <name evidence="1" type="primary">glmU</name>
    <name type="ordered locus">YPN_3976</name>
    <name type="ORF">YP516_4511</name>
</gene>
<reference key="1">
    <citation type="journal article" date="2006" name="J. Bacteriol.">
        <title>Complete genome sequence of Yersinia pestis strains Antiqua and Nepal516: evidence of gene reduction in an emerging pathogen.</title>
        <authorList>
            <person name="Chain P.S.G."/>
            <person name="Hu P."/>
            <person name="Malfatti S.A."/>
            <person name="Radnedge L."/>
            <person name="Larimer F."/>
            <person name="Vergez L.M."/>
            <person name="Worsham P."/>
            <person name="Chu M.C."/>
            <person name="Andersen G.L."/>
        </authorList>
    </citation>
    <scope>NUCLEOTIDE SEQUENCE [LARGE SCALE GENOMIC DNA]</scope>
    <source>
        <strain>Nepal516</strain>
    </source>
</reference>
<reference key="2">
    <citation type="submission" date="2009-04" db="EMBL/GenBank/DDBJ databases">
        <title>Yersinia pestis Nepal516A whole genome shotgun sequencing project.</title>
        <authorList>
            <person name="Plunkett G. III"/>
            <person name="Anderson B.D."/>
            <person name="Baumler D.J."/>
            <person name="Burland V."/>
            <person name="Cabot E.L."/>
            <person name="Glasner J.D."/>
            <person name="Mau B."/>
            <person name="Neeno-Eckwall E."/>
            <person name="Perna N.T."/>
            <person name="Munk A.C."/>
            <person name="Tapia R."/>
            <person name="Green L.D."/>
            <person name="Rogers Y.C."/>
            <person name="Detter J.C."/>
            <person name="Bruce D.C."/>
            <person name="Brettin T.S."/>
        </authorList>
    </citation>
    <scope>NUCLEOTIDE SEQUENCE [LARGE SCALE GENOMIC DNA]</scope>
    <source>
        <strain>Nepal516</strain>
    </source>
</reference>
<evidence type="ECO:0000255" key="1">
    <source>
        <dbReference type="HAMAP-Rule" id="MF_01631"/>
    </source>
</evidence>
<organism>
    <name type="scientific">Yersinia pestis bv. Antiqua (strain Nepal516)</name>
    <dbReference type="NCBI Taxonomy" id="377628"/>
    <lineage>
        <taxon>Bacteria</taxon>
        <taxon>Pseudomonadati</taxon>
        <taxon>Pseudomonadota</taxon>
        <taxon>Gammaproteobacteria</taxon>
        <taxon>Enterobacterales</taxon>
        <taxon>Yersiniaceae</taxon>
        <taxon>Yersinia</taxon>
    </lineage>
</organism>
<accession>Q1CCH7</accession>
<accession>D1Q2Z8</accession>
<comment type="function">
    <text evidence="1">Catalyzes the last two sequential reactions in the de novo biosynthetic pathway for UDP-N-acetylglucosamine (UDP-GlcNAc). The C-terminal domain catalyzes the transfer of acetyl group from acetyl coenzyme A to glucosamine-1-phosphate (GlcN-1-P) to produce N-acetylglucosamine-1-phosphate (GlcNAc-1-P), which is converted into UDP-GlcNAc by the transfer of uridine 5-monophosphate (from uridine 5-triphosphate), a reaction catalyzed by the N-terminal domain.</text>
</comment>
<comment type="catalytic activity">
    <reaction evidence="1">
        <text>alpha-D-glucosamine 1-phosphate + acetyl-CoA = N-acetyl-alpha-D-glucosamine 1-phosphate + CoA + H(+)</text>
        <dbReference type="Rhea" id="RHEA:13725"/>
        <dbReference type="ChEBI" id="CHEBI:15378"/>
        <dbReference type="ChEBI" id="CHEBI:57287"/>
        <dbReference type="ChEBI" id="CHEBI:57288"/>
        <dbReference type="ChEBI" id="CHEBI:57776"/>
        <dbReference type="ChEBI" id="CHEBI:58516"/>
        <dbReference type="EC" id="2.3.1.157"/>
    </reaction>
</comment>
<comment type="catalytic activity">
    <reaction evidence="1">
        <text>N-acetyl-alpha-D-glucosamine 1-phosphate + UTP + H(+) = UDP-N-acetyl-alpha-D-glucosamine + diphosphate</text>
        <dbReference type="Rhea" id="RHEA:13509"/>
        <dbReference type="ChEBI" id="CHEBI:15378"/>
        <dbReference type="ChEBI" id="CHEBI:33019"/>
        <dbReference type="ChEBI" id="CHEBI:46398"/>
        <dbReference type="ChEBI" id="CHEBI:57705"/>
        <dbReference type="ChEBI" id="CHEBI:57776"/>
        <dbReference type="EC" id="2.7.7.23"/>
    </reaction>
</comment>
<comment type="cofactor">
    <cofactor evidence="1">
        <name>Mg(2+)</name>
        <dbReference type="ChEBI" id="CHEBI:18420"/>
    </cofactor>
    <text evidence="1">Binds 1 Mg(2+) ion per subunit.</text>
</comment>
<comment type="pathway">
    <text evidence="1">Nucleotide-sugar biosynthesis; UDP-N-acetyl-alpha-D-glucosamine biosynthesis; N-acetyl-alpha-D-glucosamine 1-phosphate from alpha-D-glucosamine 6-phosphate (route II): step 2/2.</text>
</comment>
<comment type="pathway">
    <text evidence="1">Nucleotide-sugar biosynthesis; UDP-N-acetyl-alpha-D-glucosamine biosynthesis; UDP-N-acetyl-alpha-D-glucosamine from N-acetyl-alpha-D-glucosamine 1-phosphate: step 1/1.</text>
</comment>
<comment type="pathway">
    <text evidence="1">Bacterial outer membrane biogenesis; LPS lipid A biosynthesis.</text>
</comment>
<comment type="subunit">
    <text evidence="1">Homotrimer.</text>
</comment>
<comment type="subcellular location">
    <subcellularLocation>
        <location evidence="1">Cytoplasm</location>
    </subcellularLocation>
</comment>
<comment type="similarity">
    <text evidence="1">In the N-terminal section; belongs to the N-acetylglucosamine-1-phosphate uridyltransferase family.</text>
</comment>
<comment type="similarity">
    <text evidence="1">In the C-terminal section; belongs to the transferase hexapeptide repeat family.</text>
</comment>
<feature type="chain" id="PRO_0000263167" description="Bifunctional protein GlmU">
    <location>
        <begin position="1"/>
        <end position="456"/>
    </location>
</feature>
<feature type="region of interest" description="Pyrophosphorylase" evidence="1">
    <location>
        <begin position="1"/>
        <end position="229"/>
    </location>
</feature>
<feature type="region of interest" description="Linker" evidence="1">
    <location>
        <begin position="230"/>
        <end position="250"/>
    </location>
</feature>
<feature type="region of interest" description="N-acetyltransferase" evidence="1">
    <location>
        <begin position="251"/>
        <end position="456"/>
    </location>
</feature>
<feature type="active site" description="Proton acceptor" evidence="1">
    <location>
        <position position="363"/>
    </location>
</feature>
<feature type="binding site" evidence="1">
    <location>
        <begin position="11"/>
        <end position="14"/>
    </location>
    <ligand>
        <name>UDP-N-acetyl-alpha-D-glucosamine</name>
        <dbReference type="ChEBI" id="CHEBI:57705"/>
    </ligand>
</feature>
<feature type="binding site" evidence="1">
    <location>
        <position position="25"/>
    </location>
    <ligand>
        <name>UDP-N-acetyl-alpha-D-glucosamine</name>
        <dbReference type="ChEBI" id="CHEBI:57705"/>
    </ligand>
</feature>
<feature type="binding site" evidence="1">
    <location>
        <position position="76"/>
    </location>
    <ligand>
        <name>UDP-N-acetyl-alpha-D-glucosamine</name>
        <dbReference type="ChEBI" id="CHEBI:57705"/>
    </ligand>
</feature>
<feature type="binding site" evidence="1">
    <location>
        <begin position="81"/>
        <end position="82"/>
    </location>
    <ligand>
        <name>UDP-N-acetyl-alpha-D-glucosamine</name>
        <dbReference type="ChEBI" id="CHEBI:57705"/>
    </ligand>
</feature>
<feature type="binding site" evidence="1">
    <location>
        <begin position="103"/>
        <end position="105"/>
    </location>
    <ligand>
        <name>UDP-N-acetyl-alpha-D-glucosamine</name>
        <dbReference type="ChEBI" id="CHEBI:57705"/>
    </ligand>
</feature>
<feature type="binding site" evidence="1">
    <location>
        <position position="105"/>
    </location>
    <ligand>
        <name>Mg(2+)</name>
        <dbReference type="ChEBI" id="CHEBI:18420"/>
    </ligand>
</feature>
<feature type="binding site" evidence="1">
    <location>
        <position position="140"/>
    </location>
    <ligand>
        <name>UDP-N-acetyl-alpha-D-glucosamine</name>
        <dbReference type="ChEBI" id="CHEBI:57705"/>
    </ligand>
</feature>
<feature type="binding site" evidence="1">
    <location>
        <position position="154"/>
    </location>
    <ligand>
        <name>UDP-N-acetyl-alpha-D-glucosamine</name>
        <dbReference type="ChEBI" id="CHEBI:57705"/>
    </ligand>
</feature>
<feature type="binding site" evidence="1">
    <location>
        <position position="169"/>
    </location>
    <ligand>
        <name>UDP-N-acetyl-alpha-D-glucosamine</name>
        <dbReference type="ChEBI" id="CHEBI:57705"/>
    </ligand>
</feature>
<feature type="binding site" evidence="1">
    <location>
        <position position="227"/>
    </location>
    <ligand>
        <name>Mg(2+)</name>
        <dbReference type="ChEBI" id="CHEBI:18420"/>
    </ligand>
</feature>
<feature type="binding site" evidence="1">
    <location>
        <position position="227"/>
    </location>
    <ligand>
        <name>UDP-N-acetyl-alpha-D-glucosamine</name>
        <dbReference type="ChEBI" id="CHEBI:57705"/>
    </ligand>
</feature>
<feature type="binding site" evidence="1">
    <location>
        <position position="333"/>
    </location>
    <ligand>
        <name>UDP-N-acetyl-alpha-D-glucosamine</name>
        <dbReference type="ChEBI" id="CHEBI:57705"/>
    </ligand>
</feature>
<feature type="binding site" evidence="1">
    <location>
        <position position="351"/>
    </location>
    <ligand>
        <name>UDP-N-acetyl-alpha-D-glucosamine</name>
        <dbReference type="ChEBI" id="CHEBI:57705"/>
    </ligand>
</feature>
<feature type="binding site" evidence="1">
    <location>
        <position position="366"/>
    </location>
    <ligand>
        <name>UDP-N-acetyl-alpha-D-glucosamine</name>
        <dbReference type="ChEBI" id="CHEBI:57705"/>
    </ligand>
</feature>
<feature type="binding site" evidence="1">
    <location>
        <position position="377"/>
    </location>
    <ligand>
        <name>UDP-N-acetyl-alpha-D-glucosamine</name>
        <dbReference type="ChEBI" id="CHEBI:57705"/>
    </ligand>
</feature>
<feature type="binding site" evidence="1">
    <location>
        <position position="380"/>
    </location>
    <ligand>
        <name>acetyl-CoA</name>
        <dbReference type="ChEBI" id="CHEBI:57288"/>
    </ligand>
</feature>
<feature type="binding site" evidence="1">
    <location>
        <begin position="386"/>
        <end position="387"/>
    </location>
    <ligand>
        <name>acetyl-CoA</name>
        <dbReference type="ChEBI" id="CHEBI:57288"/>
    </ligand>
</feature>
<feature type="binding site" evidence="1">
    <location>
        <position position="405"/>
    </location>
    <ligand>
        <name>acetyl-CoA</name>
        <dbReference type="ChEBI" id="CHEBI:57288"/>
    </ligand>
</feature>
<feature type="binding site" evidence="1">
    <location>
        <position position="423"/>
    </location>
    <ligand>
        <name>acetyl-CoA</name>
        <dbReference type="ChEBI" id="CHEBI:57288"/>
    </ligand>
</feature>
<feature type="binding site" evidence="1">
    <location>
        <position position="440"/>
    </location>
    <ligand>
        <name>acetyl-CoA</name>
        <dbReference type="ChEBI" id="CHEBI:57288"/>
    </ligand>
</feature>
<keyword id="KW-0012">Acyltransferase</keyword>
<keyword id="KW-0133">Cell shape</keyword>
<keyword id="KW-0961">Cell wall biogenesis/degradation</keyword>
<keyword id="KW-0963">Cytoplasm</keyword>
<keyword id="KW-0460">Magnesium</keyword>
<keyword id="KW-0479">Metal-binding</keyword>
<keyword id="KW-0511">Multifunctional enzyme</keyword>
<keyword id="KW-0548">Nucleotidyltransferase</keyword>
<keyword id="KW-0573">Peptidoglycan synthesis</keyword>
<keyword id="KW-0677">Repeat</keyword>
<keyword id="KW-0808">Transferase</keyword>
<protein>
    <recommendedName>
        <fullName evidence="1">Bifunctional protein GlmU</fullName>
    </recommendedName>
    <domain>
        <recommendedName>
            <fullName evidence="1">UDP-N-acetylglucosamine pyrophosphorylase</fullName>
            <ecNumber evidence="1">2.7.7.23</ecNumber>
        </recommendedName>
        <alternativeName>
            <fullName evidence="1">N-acetylglucosamine-1-phosphate uridyltransferase</fullName>
        </alternativeName>
    </domain>
    <domain>
        <recommendedName>
            <fullName evidence="1">Glucosamine-1-phosphate N-acetyltransferase</fullName>
            <ecNumber evidence="1">2.3.1.157</ecNumber>
        </recommendedName>
    </domain>
</protein>
<name>GLMU_YERPN</name>
<proteinExistence type="inferred from homology"/>